<dbReference type="EMBL" id="AL513382">
    <property type="protein sequence ID" value="CAD05311.1"/>
    <property type="molecule type" value="Genomic_DNA"/>
</dbReference>
<dbReference type="EMBL" id="AE014613">
    <property type="protein sequence ID" value="AAO69636.1"/>
    <property type="molecule type" value="Genomic_DNA"/>
</dbReference>
<dbReference type="RefSeq" id="NP_455399.1">
    <property type="nucleotide sequence ID" value="NC_003198.1"/>
</dbReference>
<dbReference type="RefSeq" id="WP_000495513.1">
    <property type="nucleotide sequence ID" value="NZ_WSUR01000019.1"/>
</dbReference>
<dbReference type="SMR" id="P0A1P9"/>
<dbReference type="STRING" id="220341.gene:17584901"/>
<dbReference type="KEGG" id="stt:t2024"/>
<dbReference type="KEGG" id="sty:STY0905"/>
<dbReference type="PATRIC" id="fig|220341.7.peg.914"/>
<dbReference type="eggNOG" id="COG0695">
    <property type="taxonomic scope" value="Bacteria"/>
</dbReference>
<dbReference type="HOGENOM" id="CLU_026126_7_3_6"/>
<dbReference type="OMA" id="VGGCTEF"/>
<dbReference type="OrthoDB" id="9814618at2"/>
<dbReference type="Proteomes" id="UP000000541">
    <property type="component" value="Chromosome"/>
</dbReference>
<dbReference type="Proteomes" id="UP000002670">
    <property type="component" value="Chromosome"/>
</dbReference>
<dbReference type="GO" id="GO:0005737">
    <property type="term" value="C:cytoplasm"/>
    <property type="evidence" value="ECO:0007669"/>
    <property type="project" value="TreeGrafter"/>
</dbReference>
<dbReference type="GO" id="GO:0009055">
    <property type="term" value="F:electron transfer activity"/>
    <property type="evidence" value="ECO:0007669"/>
    <property type="project" value="InterPro"/>
</dbReference>
<dbReference type="GO" id="GO:0015038">
    <property type="term" value="F:glutathione disulfide oxidoreductase activity"/>
    <property type="evidence" value="ECO:0007669"/>
    <property type="project" value="TreeGrafter"/>
</dbReference>
<dbReference type="GO" id="GO:0015035">
    <property type="term" value="F:protein-disulfide reductase activity"/>
    <property type="evidence" value="ECO:0007669"/>
    <property type="project" value="InterPro"/>
</dbReference>
<dbReference type="GO" id="GO:0045454">
    <property type="term" value="P:cell redox homeostasis"/>
    <property type="evidence" value="ECO:0007669"/>
    <property type="project" value="InterPro"/>
</dbReference>
<dbReference type="GO" id="GO:0034599">
    <property type="term" value="P:cellular response to oxidative stress"/>
    <property type="evidence" value="ECO:0007669"/>
    <property type="project" value="TreeGrafter"/>
</dbReference>
<dbReference type="GO" id="GO:0009263">
    <property type="term" value="P:deoxyribonucleotide biosynthetic process"/>
    <property type="evidence" value="ECO:0007669"/>
    <property type="project" value="UniProtKB-KW"/>
</dbReference>
<dbReference type="CDD" id="cd02066">
    <property type="entry name" value="GRX_family"/>
    <property type="match status" value="1"/>
</dbReference>
<dbReference type="Gene3D" id="3.40.30.10">
    <property type="entry name" value="Glutaredoxin"/>
    <property type="match status" value="1"/>
</dbReference>
<dbReference type="InterPro" id="IPR011767">
    <property type="entry name" value="GLR_AS"/>
</dbReference>
<dbReference type="InterPro" id="IPR002109">
    <property type="entry name" value="Glutaredoxin"/>
</dbReference>
<dbReference type="InterPro" id="IPR014025">
    <property type="entry name" value="Glutaredoxin_subgr"/>
</dbReference>
<dbReference type="InterPro" id="IPR011902">
    <property type="entry name" value="GRXA"/>
</dbReference>
<dbReference type="InterPro" id="IPR036249">
    <property type="entry name" value="Thioredoxin-like_sf"/>
</dbReference>
<dbReference type="NCBIfam" id="TIGR02183">
    <property type="entry name" value="GRXA"/>
    <property type="match status" value="1"/>
</dbReference>
<dbReference type="NCBIfam" id="NF008401">
    <property type="entry name" value="PRK11200.1"/>
    <property type="match status" value="1"/>
</dbReference>
<dbReference type="PANTHER" id="PTHR45694:SF28">
    <property type="entry name" value="GLUTAREDOXIN 1"/>
    <property type="match status" value="1"/>
</dbReference>
<dbReference type="PANTHER" id="PTHR45694">
    <property type="entry name" value="GLUTAREDOXIN 2"/>
    <property type="match status" value="1"/>
</dbReference>
<dbReference type="Pfam" id="PF00462">
    <property type="entry name" value="Glutaredoxin"/>
    <property type="match status" value="1"/>
</dbReference>
<dbReference type="PRINTS" id="PR00160">
    <property type="entry name" value="GLUTAREDOXIN"/>
</dbReference>
<dbReference type="SUPFAM" id="SSF52833">
    <property type="entry name" value="Thioredoxin-like"/>
    <property type="match status" value="1"/>
</dbReference>
<dbReference type="PROSITE" id="PS00195">
    <property type="entry name" value="GLUTAREDOXIN_1"/>
    <property type="match status" value="1"/>
</dbReference>
<dbReference type="PROSITE" id="PS51354">
    <property type="entry name" value="GLUTAREDOXIN_2"/>
    <property type="match status" value="1"/>
</dbReference>
<gene>
    <name type="primary">grxA</name>
    <name type="ordered locus">STY0905</name>
    <name type="ordered locus">t2024</name>
</gene>
<keyword id="KW-0215">Deoxyribonucleotide synthesis</keyword>
<keyword id="KW-1015">Disulfide bond</keyword>
<keyword id="KW-0249">Electron transport</keyword>
<keyword id="KW-0676">Redox-active center</keyword>
<keyword id="KW-0813">Transport</keyword>
<name>GLRX1_SALTI</name>
<evidence type="ECO:0000250" key="1"/>
<evidence type="ECO:0000255" key="2">
    <source>
        <dbReference type="PROSITE-ProRule" id="PRU00686"/>
    </source>
</evidence>
<evidence type="ECO:0000305" key="3"/>
<proteinExistence type="inferred from homology"/>
<sequence length="87" mass="9924">MFTVIFGRPGCPYCVRAKELAEKLSKERDDFNYRYIDIHAEGITKADLEKTVGKPVETVPQIFVDQKHIGGCTDFEAWAKENLNLFA</sequence>
<reference key="1">
    <citation type="journal article" date="2001" name="Nature">
        <title>Complete genome sequence of a multiple drug resistant Salmonella enterica serovar Typhi CT18.</title>
        <authorList>
            <person name="Parkhill J."/>
            <person name="Dougan G."/>
            <person name="James K.D."/>
            <person name="Thomson N.R."/>
            <person name="Pickard D."/>
            <person name="Wain J."/>
            <person name="Churcher C.M."/>
            <person name="Mungall K.L."/>
            <person name="Bentley S.D."/>
            <person name="Holden M.T.G."/>
            <person name="Sebaihia M."/>
            <person name="Baker S."/>
            <person name="Basham D."/>
            <person name="Brooks K."/>
            <person name="Chillingworth T."/>
            <person name="Connerton P."/>
            <person name="Cronin A."/>
            <person name="Davis P."/>
            <person name="Davies R.M."/>
            <person name="Dowd L."/>
            <person name="White N."/>
            <person name="Farrar J."/>
            <person name="Feltwell T."/>
            <person name="Hamlin N."/>
            <person name="Haque A."/>
            <person name="Hien T.T."/>
            <person name="Holroyd S."/>
            <person name="Jagels K."/>
            <person name="Krogh A."/>
            <person name="Larsen T.S."/>
            <person name="Leather S."/>
            <person name="Moule S."/>
            <person name="O'Gaora P."/>
            <person name="Parry C."/>
            <person name="Quail M.A."/>
            <person name="Rutherford K.M."/>
            <person name="Simmonds M."/>
            <person name="Skelton J."/>
            <person name="Stevens K."/>
            <person name="Whitehead S."/>
            <person name="Barrell B.G."/>
        </authorList>
    </citation>
    <scope>NUCLEOTIDE SEQUENCE [LARGE SCALE GENOMIC DNA]</scope>
    <source>
        <strain>CT18</strain>
    </source>
</reference>
<reference key="2">
    <citation type="journal article" date="2003" name="J. Bacteriol.">
        <title>Comparative genomics of Salmonella enterica serovar Typhi strains Ty2 and CT18.</title>
        <authorList>
            <person name="Deng W."/>
            <person name="Liou S.-R."/>
            <person name="Plunkett G. III"/>
            <person name="Mayhew G.F."/>
            <person name="Rose D.J."/>
            <person name="Burland V."/>
            <person name="Kodoyianni V."/>
            <person name="Schwartz D.C."/>
            <person name="Blattner F.R."/>
        </authorList>
    </citation>
    <scope>NUCLEOTIDE SEQUENCE [LARGE SCALE GENOMIC DNA]</scope>
    <source>
        <strain>ATCC 700931 / Ty2</strain>
    </source>
</reference>
<protein>
    <recommendedName>
        <fullName>Glutaredoxin 1</fullName>
        <shortName>Grx1</shortName>
    </recommendedName>
</protein>
<comment type="function">
    <text evidence="1">The disulfide bond functions as an electron carrier in the glutathione-dependent synthesis of deoxyribonucleotides by the enzyme ribonucleotide reductase. In addition, it is also involved in reducing some disulfides in a coupled system with glutathione reductase (By similarity).</text>
</comment>
<comment type="subunit">
    <text evidence="1">Monomer.</text>
</comment>
<comment type="similarity">
    <text evidence="3">Belongs to the glutaredoxin family.</text>
</comment>
<feature type="chain" id="PRO_0000141582" description="Glutaredoxin 1">
    <location>
        <begin position="1"/>
        <end position="87"/>
    </location>
</feature>
<feature type="domain" description="Glutaredoxin" evidence="2">
    <location>
        <begin position="1"/>
        <end position="87"/>
    </location>
</feature>
<feature type="disulfide bond" description="Redox-active" evidence="1">
    <location>
        <begin position="11"/>
        <end position="14"/>
    </location>
</feature>
<accession>P0A1P9</accession>
<accession>Q9Z5Z3</accession>
<organism>
    <name type="scientific">Salmonella typhi</name>
    <dbReference type="NCBI Taxonomy" id="90370"/>
    <lineage>
        <taxon>Bacteria</taxon>
        <taxon>Pseudomonadati</taxon>
        <taxon>Pseudomonadota</taxon>
        <taxon>Gammaproteobacteria</taxon>
        <taxon>Enterobacterales</taxon>
        <taxon>Enterobacteriaceae</taxon>
        <taxon>Salmonella</taxon>
    </lineage>
</organism>